<keyword id="KW-0067">ATP-binding</keyword>
<keyword id="KW-0963">Cytoplasm</keyword>
<keyword id="KW-0418">Kinase</keyword>
<keyword id="KW-0460">Magnesium</keyword>
<keyword id="KW-0479">Metal-binding</keyword>
<keyword id="KW-0547">Nucleotide-binding</keyword>
<keyword id="KW-0808">Transferase</keyword>
<dbReference type="EC" id="2.7.2.1" evidence="1"/>
<dbReference type="EMBL" id="AL766844">
    <property type="protein sequence ID" value="CAD45812.1"/>
    <property type="molecule type" value="Genomic_DNA"/>
</dbReference>
<dbReference type="RefSeq" id="WP_000047535.1">
    <property type="nucleotide sequence ID" value="NC_004368.1"/>
</dbReference>
<dbReference type="SMR" id="Q8E7I7"/>
<dbReference type="KEGG" id="san:ackA"/>
<dbReference type="eggNOG" id="COG0282">
    <property type="taxonomic scope" value="Bacteria"/>
</dbReference>
<dbReference type="HOGENOM" id="CLU_020352_0_1_9"/>
<dbReference type="UniPathway" id="UPA00340">
    <property type="reaction ID" value="UER00458"/>
</dbReference>
<dbReference type="Proteomes" id="UP000000823">
    <property type="component" value="Chromosome"/>
</dbReference>
<dbReference type="GO" id="GO:0005737">
    <property type="term" value="C:cytoplasm"/>
    <property type="evidence" value="ECO:0007669"/>
    <property type="project" value="UniProtKB-SubCell"/>
</dbReference>
<dbReference type="GO" id="GO:0008776">
    <property type="term" value="F:acetate kinase activity"/>
    <property type="evidence" value="ECO:0007669"/>
    <property type="project" value="UniProtKB-UniRule"/>
</dbReference>
<dbReference type="GO" id="GO:0005524">
    <property type="term" value="F:ATP binding"/>
    <property type="evidence" value="ECO:0007669"/>
    <property type="project" value="UniProtKB-KW"/>
</dbReference>
<dbReference type="GO" id="GO:0000287">
    <property type="term" value="F:magnesium ion binding"/>
    <property type="evidence" value="ECO:0007669"/>
    <property type="project" value="UniProtKB-UniRule"/>
</dbReference>
<dbReference type="GO" id="GO:0006083">
    <property type="term" value="P:acetate metabolic process"/>
    <property type="evidence" value="ECO:0007669"/>
    <property type="project" value="TreeGrafter"/>
</dbReference>
<dbReference type="GO" id="GO:0006085">
    <property type="term" value="P:acetyl-CoA biosynthetic process"/>
    <property type="evidence" value="ECO:0007669"/>
    <property type="project" value="UniProtKB-UniRule"/>
</dbReference>
<dbReference type="CDD" id="cd24010">
    <property type="entry name" value="ASKHA_NBD_AcK_PK"/>
    <property type="match status" value="1"/>
</dbReference>
<dbReference type="Gene3D" id="3.30.420.40">
    <property type="match status" value="2"/>
</dbReference>
<dbReference type="HAMAP" id="MF_00020">
    <property type="entry name" value="Acetate_kinase"/>
    <property type="match status" value="1"/>
</dbReference>
<dbReference type="InterPro" id="IPR004372">
    <property type="entry name" value="Ac/propionate_kinase"/>
</dbReference>
<dbReference type="InterPro" id="IPR000890">
    <property type="entry name" value="Aliphatic_acid_kin_short-chain"/>
</dbReference>
<dbReference type="InterPro" id="IPR023865">
    <property type="entry name" value="Aliphatic_acid_kinase_CS"/>
</dbReference>
<dbReference type="InterPro" id="IPR043129">
    <property type="entry name" value="ATPase_NBD"/>
</dbReference>
<dbReference type="NCBIfam" id="TIGR00016">
    <property type="entry name" value="ackA"/>
    <property type="match status" value="1"/>
</dbReference>
<dbReference type="PANTHER" id="PTHR21060">
    <property type="entry name" value="ACETATE KINASE"/>
    <property type="match status" value="1"/>
</dbReference>
<dbReference type="PANTHER" id="PTHR21060:SF15">
    <property type="entry name" value="ACETATE KINASE-RELATED"/>
    <property type="match status" value="1"/>
</dbReference>
<dbReference type="Pfam" id="PF00871">
    <property type="entry name" value="Acetate_kinase"/>
    <property type="match status" value="1"/>
</dbReference>
<dbReference type="PIRSF" id="PIRSF000722">
    <property type="entry name" value="Acetate_prop_kin"/>
    <property type="match status" value="1"/>
</dbReference>
<dbReference type="PRINTS" id="PR00471">
    <property type="entry name" value="ACETATEKNASE"/>
</dbReference>
<dbReference type="SUPFAM" id="SSF53067">
    <property type="entry name" value="Actin-like ATPase domain"/>
    <property type="match status" value="2"/>
</dbReference>
<dbReference type="PROSITE" id="PS01075">
    <property type="entry name" value="ACETATE_KINASE_1"/>
    <property type="match status" value="1"/>
</dbReference>
<dbReference type="PROSITE" id="PS01076">
    <property type="entry name" value="ACETATE_KINASE_2"/>
    <property type="match status" value="1"/>
</dbReference>
<gene>
    <name evidence="1" type="primary">ackA</name>
    <name type="ordered locus">gbs0167</name>
</gene>
<accession>Q8E7I7</accession>
<sequence>MSKTIAINAGSSSLKWQLYEMPEEKVVAKGIIERIGLKDSISTVKFDDKKDEQILDIVDHTQAVKILLEDLTKHGIIKDFNEITGVGHRVVAGGEYFKESALVDDKVVEQVEELSALAPLHNPAAAAGIRAFREILPDITSVCVFDTAFHTTMQPHTYLYPIPQKYYTDYKVRKYGAHGTSHQYVAQEAAKQLGRPLEELKLITAHVGNGVSITANYHGQSIDTSMGFTPLAGPMMGTRSGDIDPAIIPYLVANDSELEDAAAVVNMLNKQSGLLGVSGTSSDMRDIEAGLQSKDPNAVLAYNVFIDRIKKFIGQYLAVLNGADAIIFTAGMGENAPLMRQDVIAGLSWFGIELDPEKNVFGYFGDITKPDSKVKVLVIPTDEELMIARDVERLKAK</sequence>
<comment type="function">
    <text evidence="1">Catalyzes the formation of acetyl phosphate from acetate and ATP. Can also catalyze the reverse reaction.</text>
</comment>
<comment type="catalytic activity">
    <reaction evidence="1">
        <text>acetate + ATP = acetyl phosphate + ADP</text>
        <dbReference type="Rhea" id="RHEA:11352"/>
        <dbReference type="ChEBI" id="CHEBI:22191"/>
        <dbReference type="ChEBI" id="CHEBI:30089"/>
        <dbReference type="ChEBI" id="CHEBI:30616"/>
        <dbReference type="ChEBI" id="CHEBI:456216"/>
        <dbReference type="EC" id="2.7.2.1"/>
    </reaction>
</comment>
<comment type="cofactor">
    <cofactor evidence="1">
        <name>Mg(2+)</name>
        <dbReference type="ChEBI" id="CHEBI:18420"/>
    </cofactor>
    <cofactor evidence="1">
        <name>Mn(2+)</name>
        <dbReference type="ChEBI" id="CHEBI:29035"/>
    </cofactor>
    <text evidence="1">Mg(2+). Can also accept Mn(2+).</text>
</comment>
<comment type="pathway">
    <text evidence="1">Metabolic intermediate biosynthesis; acetyl-CoA biosynthesis; acetyl-CoA from acetate: step 1/2.</text>
</comment>
<comment type="subunit">
    <text evidence="1">Homodimer.</text>
</comment>
<comment type="subcellular location">
    <subcellularLocation>
        <location evidence="1">Cytoplasm</location>
    </subcellularLocation>
</comment>
<comment type="similarity">
    <text evidence="1">Belongs to the acetokinase family.</text>
</comment>
<feature type="chain" id="PRO_0000107618" description="Acetate kinase">
    <location>
        <begin position="1"/>
        <end position="397"/>
    </location>
</feature>
<feature type="active site" description="Proton donor/acceptor" evidence="1">
    <location>
        <position position="146"/>
    </location>
</feature>
<feature type="binding site" evidence="1">
    <location>
        <position position="8"/>
    </location>
    <ligand>
        <name>Mg(2+)</name>
        <dbReference type="ChEBI" id="CHEBI:18420"/>
    </ligand>
</feature>
<feature type="binding site" evidence="1">
    <location>
        <position position="15"/>
    </location>
    <ligand>
        <name>ATP</name>
        <dbReference type="ChEBI" id="CHEBI:30616"/>
    </ligand>
</feature>
<feature type="binding site" evidence="1">
    <location>
        <position position="89"/>
    </location>
    <ligand>
        <name>substrate</name>
    </ligand>
</feature>
<feature type="binding site" evidence="1">
    <location>
        <begin position="206"/>
        <end position="210"/>
    </location>
    <ligand>
        <name>ATP</name>
        <dbReference type="ChEBI" id="CHEBI:30616"/>
    </ligand>
</feature>
<feature type="binding site" evidence="1">
    <location>
        <begin position="283"/>
        <end position="285"/>
    </location>
    <ligand>
        <name>ATP</name>
        <dbReference type="ChEBI" id="CHEBI:30616"/>
    </ligand>
</feature>
<feature type="binding site" evidence="1">
    <location>
        <begin position="331"/>
        <end position="335"/>
    </location>
    <ligand>
        <name>ATP</name>
        <dbReference type="ChEBI" id="CHEBI:30616"/>
    </ligand>
</feature>
<feature type="binding site" evidence="1">
    <location>
        <position position="383"/>
    </location>
    <ligand>
        <name>Mg(2+)</name>
        <dbReference type="ChEBI" id="CHEBI:18420"/>
    </ligand>
</feature>
<feature type="site" description="Transition state stabilizer" evidence="1">
    <location>
        <position position="178"/>
    </location>
</feature>
<feature type="site" description="Transition state stabilizer" evidence="1">
    <location>
        <position position="239"/>
    </location>
</feature>
<evidence type="ECO:0000255" key="1">
    <source>
        <dbReference type="HAMAP-Rule" id="MF_00020"/>
    </source>
</evidence>
<proteinExistence type="inferred from homology"/>
<organism>
    <name type="scientific">Streptococcus agalactiae serotype III (strain NEM316)</name>
    <dbReference type="NCBI Taxonomy" id="211110"/>
    <lineage>
        <taxon>Bacteria</taxon>
        <taxon>Bacillati</taxon>
        <taxon>Bacillota</taxon>
        <taxon>Bacilli</taxon>
        <taxon>Lactobacillales</taxon>
        <taxon>Streptococcaceae</taxon>
        <taxon>Streptococcus</taxon>
    </lineage>
</organism>
<reference key="1">
    <citation type="journal article" date="2002" name="Mol. Microbiol.">
        <title>Genome sequence of Streptococcus agalactiae, a pathogen causing invasive neonatal disease.</title>
        <authorList>
            <person name="Glaser P."/>
            <person name="Rusniok C."/>
            <person name="Buchrieser C."/>
            <person name="Chevalier F."/>
            <person name="Frangeul L."/>
            <person name="Msadek T."/>
            <person name="Zouine M."/>
            <person name="Couve E."/>
            <person name="Lalioui L."/>
            <person name="Poyart C."/>
            <person name="Trieu-Cuot P."/>
            <person name="Kunst F."/>
        </authorList>
    </citation>
    <scope>NUCLEOTIDE SEQUENCE [LARGE SCALE GENOMIC DNA]</scope>
    <source>
        <strain>NEM316</strain>
    </source>
</reference>
<name>ACKA_STRA3</name>
<protein>
    <recommendedName>
        <fullName evidence="1">Acetate kinase</fullName>
        <ecNumber evidence="1">2.7.2.1</ecNumber>
    </recommendedName>
    <alternativeName>
        <fullName evidence="1">Acetokinase</fullName>
    </alternativeName>
</protein>